<name>ROT1_LODEL</name>
<gene>
    <name type="primary">ROT1</name>
    <name type="ORF">LELG_01357</name>
</gene>
<reference key="1">
    <citation type="journal article" date="2009" name="Nature">
        <title>Evolution of pathogenicity and sexual reproduction in eight Candida genomes.</title>
        <authorList>
            <person name="Butler G."/>
            <person name="Rasmussen M.D."/>
            <person name="Lin M.F."/>
            <person name="Santos M.A.S."/>
            <person name="Sakthikumar S."/>
            <person name="Munro C.A."/>
            <person name="Rheinbay E."/>
            <person name="Grabherr M."/>
            <person name="Forche A."/>
            <person name="Reedy J.L."/>
            <person name="Agrafioti I."/>
            <person name="Arnaud M.B."/>
            <person name="Bates S."/>
            <person name="Brown A.J.P."/>
            <person name="Brunke S."/>
            <person name="Costanzo M.C."/>
            <person name="Fitzpatrick D.A."/>
            <person name="de Groot P.W.J."/>
            <person name="Harris D."/>
            <person name="Hoyer L.L."/>
            <person name="Hube B."/>
            <person name="Klis F.M."/>
            <person name="Kodira C."/>
            <person name="Lennard N."/>
            <person name="Logue M.E."/>
            <person name="Martin R."/>
            <person name="Neiman A.M."/>
            <person name="Nikolaou E."/>
            <person name="Quail M.A."/>
            <person name="Quinn J."/>
            <person name="Santos M.C."/>
            <person name="Schmitzberger F.F."/>
            <person name="Sherlock G."/>
            <person name="Shah P."/>
            <person name="Silverstein K.A.T."/>
            <person name="Skrzypek M.S."/>
            <person name="Soll D."/>
            <person name="Staggs R."/>
            <person name="Stansfield I."/>
            <person name="Stumpf M.P.H."/>
            <person name="Sudbery P.E."/>
            <person name="Srikantha T."/>
            <person name="Zeng Q."/>
            <person name="Berman J."/>
            <person name="Berriman M."/>
            <person name="Heitman J."/>
            <person name="Gow N.A.R."/>
            <person name="Lorenz M.C."/>
            <person name="Birren B.W."/>
            <person name="Kellis M."/>
            <person name="Cuomo C.A."/>
        </authorList>
    </citation>
    <scope>NUCLEOTIDE SEQUENCE [LARGE SCALE GENOMIC DNA]</scope>
    <source>
        <strain>ATCC 11503 / BCRC 21390 / CBS 2605 / JCM 1781 / NBRC 1676 / NRRL YB-4239</strain>
    </source>
</reference>
<proteinExistence type="inferred from homology"/>
<evidence type="ECO:0000250" key="1"/>
<evidence type="ECO:0000255" key="2"/>
<evidence type="ECO:0000256" key="3">
    <source>
        <dbReference type="SAM" id="MobiDB-lite"/>
    </source>
</evidence>
<evidence type="ECO:0000305" key="4"/>
<comment type="function">
    <text evidence="1">Required for normal levels of the cell wall 1,6-beta-glucan. Involved in a protein folding machinery chaperoning proteins acting in various physiological processes including cell wall synthesis and lysis of autophagic bodies (By similarity).</text>
</comment>
<comment type="subcellular location">
    <subcellularLocation>
        <location evidence="1">Endoplasmic reticulum membrane</location>
        <topology evidence="1">Single-pass type I membrane protein</topology>
    </subcellularLocation>
</comment>
<comment type="similarity">
    <text evidence="4">Belongs to the ROT1 family.</text>
</comment>
<organism>
    <name type="scientific">Lodderomyces elongisporus (strain ATCC 11503 / CBS 2605 / JCM 1781 / NBRC 1676 / NRRL YB-4239)</name>
    <name type="common">Yeast</name>
    <name type="synonym">Saccharomyces elongisporus</name>
    <dbReference type="NCBI Taxonomy" id="379508"/>
    <lineage>
        <taxon>Eukaryota</taxon>
        <taxon>Fungi</taxon>
        <taxon>Dikarya</taxon>
        <taxon>Ascomycota</taxon>
        <taxon>Saccharomycotina</taxon>
        <taxon>Pichiomycetes</taxon>
        <taxon>Debaryomycetaceae</taxon>
        <taxon>Candida/Lodderomyces clade</taxon>
        <taxon>Lodderomyces</taxon>
    </lineage>
</organism>
<feature type="signal peptide" evidence="2">
    <location>
        <begin position="1"/>
        <end position="18"/>
    </location>
</feature>
<feature type="chain" id="PRO_0000333413" description="Protein ROT1">
    <location>
        <begin position="19"/>
        <end position="256"/>
    </location>
</feature>
<feature type="topological domain" description="Lumenal" evidence="2">
    <location>
        <begin position="19"/>
        <end position="234"/>
    </location>
</feature>
<feature type="transmembrane region" description="Helical" evidence="2">
    <location>
        <begin position="235"/>
        <end position="255"/>
    </location>
</feature>
<feature type="topological domain" description="Cytoplasmic" evidence="2">
    <location>
        <position position="256"/>
    </location>
</feature>
<feature type="region of interest" description="Disordered" evidence="3">
    <location>
        <begin position="189"/>
        <end position="216"/>
    </location>
</feature>
<feature type="compositionally biased region" description="Acidic residues" evidence="3">
    <location>
        <begin position="191"/>
        <end position="200"/>
    </location>
</feature>
<feature type="glycosylation site" description="N-linked (GlcNAc...) asparagine" evidence="2">
    <location>
        <position position="81"/>
    </location>
</feature>
<feature type="glycosylation site" description="N-linked (GlcNAc...) asparagine" evidence="2">
    <location>
        <position position="101"/>
    </location>
</feature>
<feature type="glycosylation site" description="N-linked (GlcNAc...) asparagine" evidence="2">
    <location>
        <position position="127"/>
    </location>
</feature>
<accession>A5DVH1</accession>
<keyword id="KW-0256">Endoplasmic reticulum</keyword>
<keyword id="KW-0325">Glycoprotein</keyword>
<keyword id="KW-0472">Membrane</keyword>
<keyword id="KW-1185">Reference proteome</keyword>
<keyword id="KW-0732">Signal</keyword>
<keyword id="KW-0812">Transmembrane</keyword>
<keyword id="KW-1133">Transmembrane helix</keyword>
<dbReference type="EMBL" id="CH981525">
    <property type="protein sequence ID" value="EDK43179.1"/>
    <property type="molecule type" value="Genomic_DNA"/>
</dbReference>
<dbReference type="RefSeq" id="XP_001526529.1">
    <property type="nucleotide sequence ID" value="XM_001526479.1"/>
</dbReference>
<dbReference type="FunCoup" id="A5DVH1">
    <property type="interactions" value="23"/>
</dbReference>
<dbReference type="STRING" id="379508.A5DVH1"/>
<dbReference type="GlyCosmos" id="A5DVH1">
    <property type="glycosylation" value="3 sites, No reported glycans"/>
</dbReference>
<dbReference type="GeneID" id="5233684"/>
<dbReference type="KEGG" id="lel:PVL30_001328"/>
<dbReference type="VEuPathDB" id="FungiDB:LELG_01357"/>
<dbReference type="eggNOG" id="ENOG502QQTG">
    <property type="taxonomic scope" value="Eukaryota"/>
</dbReference>
<dbReference type="HOGENOM" id="CLU_071622_0_0_1"/>
<dbReference type="InParanoid" id="A5DVH1"/>
<dbReference type="OMA" id="YKPPQML"/>
<dbReference type="OrthoDB" id="5327821at2759"/>
<dbReference type="Proteomes" id="UP000001996">
    <property type="component" value="Unassembled WGS sequence"/>
</dbReference>
<dbReference type="GO" id="GO:0005789">
    <property type="term" value="C:endoplasmic reticulum membrane"/>
    <property type="evidence" value="ECO:0007669"/>
    <property type="project" value="UniProtKB-SubCell"/>
</dbReference>
<dbReference type="GO" id="GO:0051082">
    <property type="term" value="F:unfolded protein binding"/>
    <property type="evidence" value="ECO:0007669"/>
    <property type="project" value="TreeGrafter"/>
</dbReference>
<dbReference type="GO" id="GO:0006458">
    <property type="term" value="P:'de novo' protein folding"/>
    <property type="evidence" value="ECO:0007669"/>
    <property type="project" value="InterPro"/>
</dbReference>
<dbReference type="GO" id="GO:0007118">
    <property type="term" value="P:budding cell apical bud growth"/>
    <property type="evidence" value="ECO:0007669"/>
    <property type="project" value="TreeGrafter"/>
</dbReference>
<dbReference type="InterPro" id="IPR019623">
    <property type="entry name" value="Rot1"/>
</dbReference>
<dbReference type="PANTHER" id="PTHR28090">
    <property type="entry name" value="PROTEIN ROT1"/>
    <property type="match status" value="1"/>
</dbReference>
<dbReference type="PANTHER" id="PTHR28090:SF1">
    <property type="entry name" value="PROTEIN ROT1"/>
    <property type="match status" value="1"/>
</dbReference>
<dbReference type="Pfam" id="PF10681">
    <property type="entry name" value="Rot1"/>
    <property type="match status" value="1"/>
</dbReference>
<dbReference type="PIRSF" id="PIRSF017290">
    <property type="entry name" value="ROT1_prd"/>
    <property type="match status" value="1"/>
</dbReference>
<sequence>MLKQFLILIFALATFVAADPLMEELEGTWTSKSNTVFTGPGFYDPVEELLIEPDLPGISYSFTKDGHYEEALYRVVSNPKNHSCPVASVTYQHGTYEIASNGSVMLTPIAVDGRQLLSDPCNQDDPNVSTYSRYVQSTYFKTYQKYVDPYHGRWTLQIYQFDGSKMQPLYLAYKPPLMLPTYALNPTDAASETDSELNDDDSSKSNSKSRRSRIKRSLENQYRTNAIRQTHDESMDKYWWFSVACLGLGSAYMFLK</sequence>
<protein>
    <recommendedName>
        <fullName>Protein ROT1</fullName>
    </recommendedName>
</protein>